<name>RL28_MARMS</name>
<keyword id="KW-0687">Ribonucleoprotein</keyword>
<keyword id="KW-0689">Ribosomal protein</keyword>
<gene>
    <name evidence="1" type="primary">rpmB</name>
    <name type="ordered locus">Mmwyl1_0629</name>
</gene>
<dbReference type="EMBL" id="CP000749">
    <property type="protein sequence ID" value="ABR69563.1"/>
    <property type="molecule type" value="Genomic_DNA"/>
</dbReference>
<dbReference type="SMR" id="A6VSY4"/>
<dbReference type="STRING" id="400668.Mmwyl1_0629"/>
<dbReference type="KEGG" id="mmw:Mmwyl1_0629"/>
<dbReference type="eggNOG" id="COG0227">
    <property type="taxonomic scope" value="Bacteria"/>
</dbReference>
<dbReference type="HOGENOM" id="CLU_064548_3_1_6"/>
<dbReference type="OrthoDB" id="9805609at2"/>
<dbReference type="GO" id="GO:0022625">
    <property type="term" value="C:cytosolic large ribosomal subunit"/>
    <property type="evidence" value="ECO:0007669"/>
    <property type="project" value="TreeGrafter"/>
</dbReference>
<dbReference type="GO" id="GO:0003735">
    <property type="term" value="F:structural constituent of ribosome"/>
    <property type="evidence" value="ECO:0007669"/>
    <property type="project" value="InterPro"/>
</dbReference>
<dbReference type="GO" id="GO:0006412">
    <property type="term" value="P:translation"/>
    <property type="evidence" value="ECO:0007669"/>
    <property type="project" value="UniProtKB-UniRule"/>
</dbReference>
<dbReference type="FunFam" id="2.30.170.40:FF:000001">
    <property type="entry name" value="50S ribosomal protein L28"/>
    <property type="match status" value="1"/>
</dbReference>
<dbReference type="Gene3D" id="2.30.170.40">
    <property type="entry name" value="Ribosomal protein L28/L24"/>
    <property type="match status" value="1"/>
</dbReference>
<dbReference type="HAMAP" id="MF_00373">
    <property type="entry name" value="Ribosomal_bL28"/>
    <property type="match status" value="1"/>
</dbReference>
<dbReference type="InterPro" id="IPR026569">
    <property type="entry name" value="Ribosomal_bL28"/>
</dbReference>
<dbReference type="InterPro" id="IPR034704">
    <property type="entry name" value="Ribosomal_bL28/bL31-like_sf"/>
</dbReference>
<dbReference type="InterPro" id="IPR001383">
    <property type="entry name" value="Ribosomal_bL28_bact-type"/>
</dbReference>
<dbReference type="InterPro" id="IPR037147">
    <property type="entry name" value="Ribosomal_bL28_sf"/>
</dbReference>
<dbReference type="NCBIfam" id="TIGR00009">
    <property type="entry name" value="L28"/>
    <property type="match status" value="1"/>
</dbReference>
<dbReference type="PANTHER" id="PTHR13528">
    <property type="entry name" value="39S RIBOSOMAL PROTEIN L28, MITOCHONDRIAL"/>
    <property type="match status" value="1"/>
</dbReference>
<dbReference type="PANTHER" id="PTHR13528:SF2">
    <property type="entry name" value="LARGE RIBOSOMAL SUBUNIT PROTEIN BL28M"/>
    <property type="match status" value="1"/>
</dbReference>
<dbReference type="Pfam" id="PF00830">
    <property type="entry name" value="Ribosomal_L28"/>
    <property type="match status" value="1"/>
</dbReference>
<dbReference type="SUPFAM" id="SSF143800">
    <property type="entry name" value="L28p-like"/>
    <property type="match status" value="1"/>
</dbReference>
<organism>
    <name type="scientific">Marinomonas sp. (strain MWYL1)</name>
    <dbReference type="NCBI Taxonomy" id="400668"/>
    <lineage>
        <taxon>Bacteria</taxon>
        <taxon>Pseudomonadati</taxon>
        <taxon>Pseudomonadota</taxon>
        <taxon>Gammaproteobacteria</taxon>
        <taxon>Oceanospirillales</taxon>
        <taxon>Oceanospirillaceae</taxon>
        <taxon>Marinomonas</taxon>
    </lineage>
</organism>
<sequence length="78" mass="9186">MSRVCQVTGKRPITGNNVSHSKRRTKRRFLPNLHWHRFWVEGENRYIRLRVSSKGMRIIDKKGIESVLAEIRANGEKV</sequence>
<feature type="chain" id="PRO_1000079854" description="Large ribosomal subunit protein bL28">
    <location>
        <begin position="1"/>
        <end position="78"/>
    </location>
</feature>
<feature type="region of interest" description="Disordered" evidence="2">
    <location>
        <begin position="1"/>
        <end position="23"/>
    </location>
</feature>
<proteinExistence type="inferred from homology"/>
<evidence type="ECO:0000255" key="1">
    <source>
        <dbReference type="HAMAP-Rule" id="MF_00373"/>
    </source>
</evidence>
<evidence type="ECO:0000256" key="2">
    <source>
        <dbReference type="SAM" id="MobiDB-lite"/>
    </source>
</evidence>
<evidence type="ECO:0000305" key="3"/>
<comment type="similarity">
    <text evidence="1">Belongs to the bacterial ribosomal protein bL28 family.</text>
</comment>
<accession>A6VSY4</accession>
<protein>
    <recommendedName>
        <fullName evidence="1">Large ribosomal subunit protein bL28</fullName>
    </recommendedName>
    <alternativeName>
        <fullName evidence="3">50S ribosomal protein L28</fullName>
    </alternativeName>
</protein>
<reference key="1">
    <citation type="submission" date="2007-06" db="EMBL/GenBank/DDBJ databases">
        <title>Complete sequence of Marinomonas sp. MWYL1.</title>
        <authorList>
            <consortium name="US DOE Joint Genome Institute"/>
            <person name="Copeland A."/>
            <person name="Lucas S."/>
            <person name="Lapidus A."/>
            <person name="Barry K."/>
            <person name="Glavina del Rio T."/>
            <person name="Dalin E."/>
            <person name="Tice H."/>
            <person name="Pitluck S."/>
            <person name="Kiss H."/>
            <person name="Brettin T."/>
            <person name="Bruce D."/>
            <person name="Detter J.C."/>
            <person name="Han C."/>
            <person name="Schmutz J."/>
            <person name="Larimer F."/>
            <person name="Land M."/>
            <person name="Hauser L."/>
            <person name="Kyrpides N."/>
            <person name="Kim E."/>
            <person name="Johnston A.W.B."/>
            <person name="Todd J.D."/>
            <person name="Rogers R."/>
            <person name="Wexler M."/>
            <person name="Bond P.L."/>
            <person name="Li Y."/>
            <person name="Richardson P."/>
        </authorList>
    </citation>
    <scope>NUCLEOTIDE SEQUENCE [LARGE SCALE GENOMIC DNA]</scope>
    <source>
        <strain>MWYL1</strain>
    </source>
</reference>